<dbReference type="EC" id="2.1.2.13" evidence="1"/>
<dbReference type="EC" id="1.1.1.305" evidence="1"/>
<dbReference type="EMBL" id="AE005674">
    <property type="protein sequence ID" value="AAN43848.1"/>
    <property type="status" value="ALT_FRAME"/>
    <property type="molecule type" value="Genomic_DNA"/>
</dbReference>
<dbReference type="EMBL" id="AE014073">
    <property type="protein sequence ID" value="AAP17667.1"/>
    <property type="status" value="ALT_FRAME"/>
    <property type="molecule type" value="Genomic_DNA"/>
</dbReference>
<dbReference type="RefSeq" id="WP_000860238.1">
    <property type="nucleotide sequence ID" value="NZ_PUHB01000212.1"/>
</dbReference>
<dbReference type="SMR" id="Q83QT8"/>
<dbReference type="STRING" id="198214.SF2334"/>
<dbReference type="PaxDb" id="198214-SF2334"/>
<dbReference type="KEGG" id="sfx:S2467"/>
<dbReference type="HOGENOM" id="CLU_007383_23_2_6"/>
<dbReference type="UniPathway" id="UPA00030"/>
<dbReference type="UniPathway" id="UPA00032">
    <property type="reaction ID" value="UER00492"/>
</dbReference>
<dbReference type="UniPathway" id="UPA00032">
    <property type="reaction ID" value="UER00494"/>
</dbReference>
<dbReference type="Proteomes" id="UP000001006">
    <property type="component" value="Chromosome"/>
</dbReference>
<dbReference type="Proteomes" id="UP000002673">
    <property type="component" value="Chromosome"/>
</dbReference>
<dbReference type="GO" id="GO:0016020">
    <property type="term" value="C:membrane"/>
    <property type="evidence" value="ECO:0007669"/>
    <property type="project" value="GOC"/>
</dbReference>
<dbReference type="GO" id="GO:0016831">
    <property type="term" value="F:carboxy-lyase activity"/>
    <property type="evidence" value="ECO:0007669"/>
    <property type="project" value="InterPro"/>
</dbReference>
<dbReference type="GO" id="GO:0099619">
    <property type="term" value="F:UDP-4-amino-4-deoxy-L-arabinose formyltransferase activity"/>
    <property type="evidence" value="ECO:0007669"/>
    <property type="project" value="UniProtKB-EC"/>
</dbReference>
<dbReference type="GO" id="GO:0099618">
    <property type="term" value="F:UDP-glucuronate dehydrogenase activity"/>
    <property type="evidence" value="ECO:0007669"/>
    <property type="project" value="UniProtKB-EC"/>
</dbReference>
<dbReference type="GO" id="GO:0009245">
    <property type="term" value="P:lipid A biosynthetic process"/>
    <property type="evidence" value="ECO:0007669"/>
    <property type="project" value="UniProtKB-KW"/>
</dbReference>
<dbReference type="GO" id="GO:0009103">
    <property type="term" value="P:lipopolysaccharide biosynthetic process"/>
    <property type="evidence" value="ECO:0007669"/>
    <property type="project" value="UniProtKB-UniRule"/>
</dbReference>
<dbReference type="GO" id="GO:0046677">
    <property type="term" value="P:response to antibiotic"/>
    <property type="evidence" value="ECO:0007669"/>
    <property type="project" value="UniProtKB-KW"/>
</dbReference>
<dbReference type="CDD" id="cd08702">
    <property type="entry name" value="Arna_FMT_C"/>
    <property type="match status" value="1"/>
</dbReference>
<dbReference type="CDD" id="cd05257">
    <property type="entry name" value="Arna_like_SDR_e"/>
    <property type="match status" value="1"/>
</dbReference>
<dbReference type="CDD" id="cd08644">
    <property type="entry name" value="FMT_core_ArnA_N"/>
    <property type="match status" value="1"/>
</dbReference>
<dbReference type="FunFam" id="3.40.50.12230:FF:000002">
    <property type="entry name" value="Bifunctional polymyxin resistance protein ArnA"/>
    <property type="match status" value="1"/>
</dbReference>
<dbReference type="FunFam" id="3.40.50.720:FF:000197">
    <property type="entry name" value="Bifunctional polymyxin resistance protein ArnA"/>
    <property type="match status" value="1"/>
</dbReference>
<dbReference type="Gene3D" id="3.40.50.12230">
    <property type="match status" value="1"/>
</dbReference>
<dbReference type="Gene3D" id="3.40.50.720">
    <property type="entry name" value="NAD(P)-binding Rossmann-like Domain"/>
    <property type="match status" value="1"/>
</dbReference>
<dbReference type="HAMAP" id="MF_01166">
    <property type="entry name" value="ArnA"/>
    <property type="match status" value="1"/>
</dbReference>
<dbReference type="InterPro" id="IPR045869">
    <property type="entry name" value="Arna-like_SDR_e"/>
</dbReference>
<dbReference type="InterPro" id="IPR021168">
    <property type="entry name" value="Bifun_polymyxin_resist_ArnA"/>
</dbReference>
<dbReference type="InterPro" id="IPR001509">
    <property type="entry name" value="Epimerase_deHydtase"/>
</dbReference>
<dbReference type="InterPro" id="IPR005793">
    <property type="entry name" value="Formyl_trans_C"/>
</dbReference>
<dbReference type="InterPro" id="IPR002376">
    <property type="entry name" value="Formyl_transf_N"/>
</dbReference>
<dbReference type="InterPro" id="IPR036477">
    <property type="entry name" value="Formyl_transf_N_sf"/>
</dbReference>
<dbReference type="InterPro" id="IPR011034">
    <property type="entry name" value="Formyl_transferase-like_C_sf"/>
</dbReference>
<dbReference type="InterPro" id="IPR050177">
    <property type="entry name" value="Lipid_A_modif_metabolic_enz"/>
</dbReference>
<dbReference type="InterPro" id="IPR036291">
    <property type="entry name" value="NAD(P)-bd_dom_sf"/>
</dbReference>
<dbReference type="NCBIfam" id="NF005414">
    <property type="entry name" value="PRK06988.1"/>
    <property type="match status" value="1"/>
</dbReference>
<dbReference type="NCBIfam" id="NF005998">
    <property type="entry name" value="PRK08125.1"/>
    <property type="match status" value="1"/>
</dbReference>
<dbReference type="NCBIfam" id="NF008872">
    <property type="entry name" value="PRK11908.1"/>
    <property type="match status" value="1"/>
</dbReference>
<dbReference type="PANTHER" id="PTHR43245">
    <property type="entry name" value="BIFUNCTIONAL POLYMYXIN RESISTANCE PROTEIN ARNA"/>
    <property type="match status" value="1"/>
</dbReference>
<dbReference type="PANTHER" id="PTHR43245:SF13">
    <property type="entry name" value="UDP-D-APIOSE_UDP-D-XYLOSE SYNTHASE 2"/>
    <property type="match status" value="1"/>
</dbReference>
<dbReference type="Pfam" id="PF01370">
    <property type="entry name" value="Epimerase"/>
    <property type="match status" value="1"/>
</dbReference>
<dbReference type="Pfam" id="PF02911">
    <property type="entry name" value="Formyl_trans_C"/>
    <property type="match status" value="1"/>
</dbReference>
<dbReference type="Pfam" id="PF00551">
    <property type="entry name" value="Formyl_trans_N"/>
    <property type="match status" value="1"/>
</dbReference>
<dbReference type="PIRSF" id="PIRSF036506">
    <property type="entry name" value="Bifun_polymyxin_resist_ArnA"/>
    <property type="match status" value="1"/>
</dbReference>
<dbReference type="SUPFAM" id="SSF50486">
    <property type="entry name" value="FMT C-terminal domain-like"/>
    <property type="match status" value="1"/>
</dbReference>
<dbReference type="SUPFAM" id="SSF53328">
    <property type="entry name" value="Formyltransferase"/>
    <property type="match status" value="1"/>
</dbReference>
<dbReference type="SUPFAM" id="SSF51735">
    <property type="entry name" value="NAD(P)-binding Rossmann-fold domains"/>
    <property type="match status" value="1"/>
</dbReference>
<gene>
    <name evidence="1" type="primary">arnA</name>
    <name type="ordered locus">SF2334</name>
    <name type="ordered locus">S2467</name>
</gene>
<reference key="1">
    <citation type="journal article" date="2002" name="Nucleic Acids Res.">
        <title>Genome sequence of Shigella flexneri 2a: insights into pathogenicity through comparison with genomes of Escherichia coli K12 and O157.</title>
        <authorList>
            <person name="Jin Q."/>
            <person name="Yuan Z."/>
            <person name="Xu J."/>
            <person name="Wang Y."/>
            <person name="Shen Y."/>
            <person name="Lu W."/>
            <person name="Wang J."/>
            <person name="Liu H."/>
            <person name="Yang J."/>
            <person name="Yang F."/>
            <person name="Zhang X."/>
            <person name="Zhang J."/>
            <person name="Yang G."/>
            <person name="Wu H."/>
            <person name="Qu D."/>
            <person name="Dong J."/>
            <person name="Sun L."/>
            <person name="Xue Y."/>
            <person name="Zhao A."/>
            <person name="Gao Y."/>
            <person name="Zhu J."/>
            <person name="Kan B."/>
            <person name="Ding K."/>
            <person name="Chen S."/>
            <person name="Cheng H."/>
            <person name="Yao Z."/>
            <person name="He B."/>
            <person name="Chen R."/>
            <person name="Ma D."/>
            <person name="Qiang B."/>
            <person name="Wen Y."/>
            <person name="Hou Y."/>
            <person name="Yu J."/>
        </authorList>
    </citation>
    <scope>NUCLEOTIDE SEQUENCE [LARGE SCALE GENOMIC DNA]</scope>
    <source>
        <strain>301 / Serotype 2a</strain>
    </source>
</reference>
<reference key="2">
    <citation type="journal article" date="2003" name="Infect. Immun.">
        <title>Complete genome sequence and comparative genomics of Shigella flexneri serotype 2a strain 2457T.</title>
        <authorList>
            <person name="Wei J."/>
            <person name="Goldberg M.B."/>
            <person name="Burland V."/>
            <person name="Venkatesan M.M."/>
            <person name="Deng W."/>
            <person name="Fournier G."/>
            <person name="Mayhew G.F."/>
            <person name="Plunkett G. III"/>
            <person name="Rose D.J."/>
            <person name="Darling A."/>
            <person name="Mau B."/>
            <person name="Perna N.T."/>
            <person name="Payne S.M."/>
            <person name="Runyen-Janecky L.J."/>
            <person name="Zhou S."/>
            <person name="Schwartz D.C."/>
            <person name="Blattner F.R."/>
        </authorList>
    </citation>
    <scope>NUCLEOTIDE SEQUENCE [LARGE SCALE GENOMIC DNA]</scope>
    <source>
        <strain>ATCC 700930 / 2457T / Serotype 2a</strain>
    </source>
</reference>
<proteinExistence type="inferred from homology"/>
<organism>
    <name type="scientific">Shigella flexneri</name>
    <dbReference type="NCBI Taxonomy" id="623"/>
    <lineage>
        <taxon>Bacteria</taxon>
        <taxon>Pseudomonadati</taxon>
        <taxon>Pseudomonadota</taxon>
        <taxon>Gammaproteobacteria</taxon>
        <taxon>Enterobacterales</taxon>
        <taxon>Enterobacteriaceae</taxon>
        <taxon>Shigella</taxon>
    </lineage>
</organism>
<protein>
    <recommendedName>
        <fullName evidence="1">Bifunctional polymyxin resistance protein ArnA</fullName>
    </recommendedName>
    <domain>
        <recommendedName>
            <fullName evidence="1">UDP-4-amino-4-deoxy-L-arabinose formyltransferase</fullName>
            <ecNumber evidence="1">2.1.2.13</ecNumber>
        </recommendedName>
        <alternativeName>
            <fullName evidence="1">ArnAFT</fullName>
        </alternativeName>
        <alternativeName>
            <fullName evidence="1">UDP-L-Ara4N formyltransferase</fullName>
        </alternativeName>
    </domain>
    <domain>
        <recommendedName>
            <fullName evidence="1">UDP-glucuronic acid oxidase, UDP-4-keto-hexauronic acid decarboxylating</fullName>
            <ecNumber evidence="1">1.1.1.305</ecNumber>
        </recommendedName>
        <alternativeName>
            <fullName evidence="1">ArnADH</fullName>
        </alternativeName>
        <alternativeName>
            <fullName evidence="1">UDP-GlcUA decarboxylase</fullName>
        </alternativeName>
        <alternativeName>
            <fullName evidence="1">UDP-glucuronic acid dehydrogenase</fullName>
        </alternativeName>
    </domain>
</protein>
<comment type="function">
    <text evidence="1">Bifunctional enzyme that catalyzes the oxidative decarboxylation of UDP-glucuronic acid (UDP-GlcUA) to UDP-4-keto-arabinose (UDP-Ara4O) and the addition of a formyl group to UDP-4-amino-4-deoxy-L-arabinose (UDP-L-Ara4N) to form UDP-L-4-formamido-arabinose (UDP-L-Ara4FN). The modified arabinose is attached to lipid A and is required for resistance to polymyxin and cationic antimicrobial peptides.</text>
</comment>
<comment type="catalytic activity">
    <reaction evidence="1">
        <text>UDP-alpha-D-glucuronate + NAD(+) = UDP-beta-L-threo-pentopyranos-4-ulose + CO2 + NADH</text>
        <dbReference type="Rhea" id="RHEA:24702"/>
        <dbReference type="ChEBI" id="CHEBI:16526"/>
        <dbReference type="ChEBI" id="CHEBI:57540"/>
        <dbReference type="ChEBI" id="CHEBI:57945"/>
        <dbReference type="ChEBI" id="CHEBI:58052"/>
        <dbReference type="ChEBI" id="CHEBI:58710"/>
        <dbReference type="EC" id="1.1.1.305"/>
    </reaction>
</comment>
<comment type="catalytic activity">
    <reaction evidence="1">
        <text>UDP-4-amino-4-deoxy-beta-L-arabinose + (6R)-10-formyltetrahydrofolate = UDP-4-deoxy-4-formamido-beta-L-arabinose + (6S)-5,6,7,8-tetrahydrofolate + H(+)</text>
        <dbReference type="Rhea" id="RHEA:24706"/>
        <dbReference type="ChEBI" id="CHEBI:15378"/>
        <dbReference type="ChEBI" id="CHEBI:57453"/>
        <dbReference type="ChEBI" id="CHEBI:58708"/>
        <dbReference type="ChEBI" id="CHEBI:58709"/>
        <dbReference type="ChEBI" id="CHEBI:195366"/>
        <dbReference type="EC" id="2.1.2.13"/>
    </reaction>
</comment>
<comment type="pathway">
    <text evidence="1">Nucleotide-sugar biosynthesis; UDP-4-deoxy-4-formamido-beta-L-arabinose biosynthesis; UDP-4-deoxy-4-formamido-beta-L-arabinose from UDP-alpha-D-glucuronate: step 1/3.</text>
</comment>
<comment type="pathway">
    <text evidence="1">Nucleotide-sugar biosynthesis; UDP-4-deoxy-4-formamido-beta-L-arabinose biosynthesis; UDP-4-deoxy-4-formamido-beta-L-arabinose from UDP-alpha-D-glucuronate: step 3/3.</text>
</comment>
<comment type="pathway">
    <text evidence="1">Bacterial outer membrane biogenesis; lipopolysaccharide biosynthesis.</text>
</comment>
<comment type="subunit">
    <text evidence="1">Homohexamer, formed by a dimer of trimers.</text>
</comment>
<comment type="similarity">
    <text evidence="1">In the N-terminal section; belongs to the Fmt family. UDP-L-Ara4N formyltransferase subfamily.</text>
</comment>
<comment type="similarity">
    <text evidence="1">In the C-terminal section; belongs to the NAD(P)-dependent epimerase/dehydratase family. UDP-glucuronic acid decarboxylase subfamily.</text>
</comment>
<comment type="sequence caution" evidence="2">
    <conflict type="frameshift">
        <sequence resource="EMBL-CDS" id="AAN43848"/>
    </conflict>
</comment>
<comment type="sequence caution" evidence="2">
    <conflict type="frameshift">
        <sequence resource="EMBL-CDS" id="AAP17667"/>
    </conflict>
</comment>
<feature type="chain" id="PRO_0000083110" description="Bifunctional polymyxin resistance protein ArnA">
    <location>
        <begin position="1"/>
        <end position="660"/>
    </location>
</feature>
<feature type="region of interest" description="Formyltransferase ArnAFT">
    <location>
        <begin position="1"/>
        <end position="304"/>
    </location>
</feature>
<feature type="region of interest" description="Dehydrogenase ArnADH">
    <location>
        <begin position="314"/>
        <end position="660"/>
    </location>
</feature>
<feature type="active site" description="Proton donor; for formyltransferase activity" evidence="1">
    <location>
        <position position="104"/>
    </location>
</feature>
<feature type="active site" description="Proton acceptor; for decarboxylase activity" evidence="1">
    <location>
        <position position="434"/>
    </location>
</feature>
<feature type="active site" description="Proton donor; for decarboxylase activity" evidence="1">
    <location>
        <position position="619"/>
    </location>
</feature>
<feature type="binding site" evidence="1">
    <location>
        <begin position="86"/>
        <end position="88"/>
    </location>
    <ligand>
        <name>(6R)-10-formyltetrahydrofolate</name>
        <dbReference type="ChEBI" id="CHEBI:195366"/>
    </ligand>
</feature>
<feature type="binding site" evidence="1">
    <location>
        <position position="114"/>
    </location>
    <ligand>
        <name>(6R)-10-formyltetrahydrofolate</name>
        <dbReference type="ChEBI" id="CHEBI:195366"/>
    </ligand>
</feature>
<feature type="binding site" evidence="1">
    <location>
        <begin position="136"/>
        <end position="140"/>
    </location>
    <ligand>
        <name>(6R)-10-formyltetrahydrofolate</name>
        <dbReference type="ChEBI" id="CHEBI:195366"/>
    </ligand>
</feature>
<feature type="binding site" evidence="1">
    <location>
        <position position="347"/>
    </location>
    <ligand>
        <name>NAD(+)</name>
        <dbReference type="ChEBI" id="CHEBI:57540"/>
    </ligand>
</feature>
<feature type="binding site" evidence="1">
    <location>
        <begin position="368"/>
        <end position="369"/>
    </location>
    <ligand>
        <name>NAD(+)</name>
        <dbReference type="ChEBI" id="CHEBI:57540"/>
    </ligand>
</feature>
<feature type="binding site" evidence="1">
    <location>
        <position position="393"/>
    </location>
    <ligand>
        <name>UDP-alpha-D-glucuronate</name>
        <dbReference type="ChEBI" id="CHEBI:58052"/>
    </ligand>
</feature>
<feature type="binding site" evidence="1">
    <location>
        <position position="398"/>
    </location>
    <ligand>
        <name>UDP-alpha-D-glucuronate</name>
        <dbReference type="ChEBI" id="CHEBI:58052"/>
    </ligand>
</feature>
<feature type="binding site" evidence="1">
    <location>
        <begin position="432"/>
        <end position="433"/>
    </location>
    <ligand>
        <name>UDP-alpha-D-glucuronate</name>
        <dbReference type="ChEBI" id="CHEBI:58052"/>
    </ligand>
</feature>
<feature type="binding site" evidence="1">
    <location>
        <position position="460"/>
    </location>
    <ligand>
        <name>UDP-alpha-D-glucuronate</name>
        <dbReference type="ChEBI" id="CHEBI:58052"/>
    </ligand>
</feature>
<feature type="binding site" evidence="1">
    <location>
        <position position="492"/>
    </location>
    <ligand>
        <name>UDP-alpha-D-glucuronate</name>
        <dbReference type="ChEBI" id="CHEBI:58052"/>
    </ligand>
</feature>
<feature type="binding site" evidence="1">
    <location>
        <begin position="526"/>
        <end position="535"/>
    </location>
    <ligand>
        <name>UDP-alpha-D-glucuronate</name>
        <dbReference type="ChEBI" id="CHEBI:58052"/>
    </ligand>
</feature>
<feature type="binding site" evidence="1">
    <location>
        <position position="613"/>
    </location>
    <ligand>
        <name>UDP-alpha-D-glucuronate</name>
        <dbReference type="ChEBI" id="CHEBI:58052"/>
    </ligand>
</feature>
<feature type="site" description="Transition state stabilizer" evidence="1">
    <location>
        <position position="102"/>
    </location>
</feature>
<feature type="site" description="Raises pKa of active site His" evidence="1">
    <location>
        <position position="140"/>
    </location>
</feature>
<sequence>MKTVVFAYHDMGCLGIEALLAAGYEISAIFTHTDNPGEKAFYGSVAHLAAERDIPVYAPDNVNHPLWVERIAQLSPEVIFSFYYRHLICDEIFQLAPAGAFNLHGSLLPKYRGRAPLNWVLVNGETETGVTLHRMVKRADAGAIVAQLRVAIAPDDIAITLHHKLCHAARQLLEQTLPAIKHGNILEIAQRENEATCFGRRTPDDSFLEWHKPASVLHNMVRAVADPWPGAFSYVGNQKFTVWSSRVHPHASKAQPGSVISVAPLLIACGDGALEIVTGQAGDGITMQGSQLAQMLGLVQGSRLNSQPACTARRRTRVLILGVNGFIGNHLTERLLREDHYEVYGLDIGSDAISRFLNHPHFHFVEGDISIHSEWIEYHVKKCDVVLPLVAIATPIEYTRNPLRVFELDFEENLRIIRYCVKYRKRIIFPSTSEVYGMCSDKYFDEDHSNLIVGPVNKPRWIYSVSKQLLDRVIWAYGEKEGLQFTLFLPFNWMGPRLDNLNAARIGSSRAITQLILNLVEGSPIKLIDGGKQKRCFTDIRDGIEALYHIIENAGNRCDGEIINIGNPENEASIEELGEMLLASFEKHPLRHHFPPFAGFRVVESSCYYGKGYQDVEHRKPSIRNAHRCLDWEPKIDMQETIDETLDFFLRTVDLTDKPS</sequence>
<evidence type="ECO:0000255" key="1">
    <source>
        <dbReference type="HAMAP-Rule" id="MF_01166"/>
    </source>
</evidence>
<evidence type="ECO:0000305" key="2"/>
<keyword id="KW-0046">Antibiotic resistance</keyword>
<keyword id="KW-0441">Lipid A biosynthesis</keyword>
<keyword id="KW-0444">Lipid biosynthesis</keyword>
<keyword id="KW-0443">Lipid metabolism</keyword>
<keyword id="KW-0448">Lipopolysaccharide biosynthesis</keyword>
<keyword id="KW-0511">Multifunctional enzyme</keyword>
<keyword id="KW-0520">NAD</keyword>
<keyword id="KW-0560">Oxidoreductase</keyword>
<keyword id="KW-1185">Reference proteome</keyword>
<keyword id="KW-0808">Transferase</keyword>
<name>ARNA_SHIFL</name>
<accession>Q83QT8</accession>
<accession>Q7C0R4</accession>